<feature type="chain" id="PRO_0000173197" description="Large ribosomal subunit protein bL31B">
    <location>
        <begin position="1"/>
        <end position="81"/>
    </location>
</feature>
<proteinExistence type="inferred from homology"/>
<keyword id="KW-0687">Ribonucleoprotein</keyword>
<keyword id="KW-0689">Ribosomal protein</keyword>
<accession>Q630R7</accession>
<evidence type="ECO:0000255" key="1">
    <source>
        <dbReference type="HAMAP-Rule" id="MF_00502"/>
    </source>
</evidence>
<evidence type="ECO:0000305" key="2"/>
<protein>
    <recommendedName>
        <fullName evidence="1">Large ribosomal subunit protein bL31B</fullName>
    </recommendedName>
    <alternativeName>
        <fullName evidence="2">50S ribosomal protein L31 type B</fullName>
    </alternativeName>
</protein>
<reference key="1">
    <citation type="journal article" date="2006" name="J. Bacteriol.">
        <title>Pathogenomic sequence analysis of Bacillus cereus and Bacillus thuringiensis isolates closely related to Bacillus anthracis.</title>
        <authorList>
            <person name="Han C.S."/>
            <person name="Xie G."/>
            <person name="Challacombe J.F."/>
            <person name="Altherr M.R."/>
            <person name="Bhotika S.S."/>
            <person name="Bruce D."/>
            <person name="Campbell C.S."/>
            <person name="Campbell M.L."/>
            <person name="Chen J."/>
            <person name="Chertkov O."/>
            <person name="Cleland C."/>
            <person name="Dimitrijevic M."/>
            <person name="Doggett N.A."/>
            <person name="Fawcett J.J."/>
            <person name="Glavina T."/>
            <person name="Goodwin L.A."/>
            <person name="Hill K.K."/>
            <person name="Hitchcock P."/>
            <person name="Jackson P.J."/>
            <person name="Keim P."/>
            <person name="Kewalramani A.R."/>
            <person name="Longmire J."/>
            <person name="Lucas S."/>
            <person name="Malfatti S."/>
            <person name="McMurry K."/>
            <person name="Meincke L.J."/>
            <person name="Misra M."/>
            <person name="Moseman B.L."/>
            <person name="Mundt M."/>
            <person name="Munk A.C."/>
            <person name="Okinaka R.T."/>
            <person name="Parson-Quintana B."/>
            <person name="Reilly L.P."/>
            <person name="Richardson P."/>
            <person name="Robinson D.L."/>
            <person name="Rubin E."/>
            <person name="Saunders E."/>
            <person name="Tapia R."/>
            <person name="Tesmer J.G."/>
            <person name="Thayer N."/>
            <person name="Thompson L.S."/>
            <person name="Tice H."/>
            <person name="Ticknor L.O."/>
            <person name="Wills P.L."/>
            <person name="Brettin T.S."/>
            <person name="Gilna P."/>
        </authorList>
    </citation>
    <scope>NUCLEOTIDE SEQUENCE [LARGE SCALE GENOMIC DNA]</scope>
    <source>
        <strain>ZK / E33L</strain>
    </source>
</reference>
<sequence length="81" mass="9184">MKAGIHPDYKKVVFMDTNTGFKFLSGSTKGSNETVEWEDGNTYPLLKVEISSDSHPFYTGRQKFATADGRVDRFNKKYGLK</sequence>
<gene>
    <name evidence="1" type="primary">rpmE2</name>
    <name type="synonym">rpmE</name>
    <name type="ordered locus">BCE33L5031</name>
</gene>
<dbReference type="EMBL" id="CP000001">
    <property type="protein sequence ID" value="AAU15248.1"/>
    <property type="molecule type" value="Genomic_DNA"/>
</dbReference>
<dbReference type="RefSeq" id="WP_000643433.1">
    <property type="nucleotide sequence ID" value="NZ_CP009968.1"/>
</dbReference>
<dbReference type="SMR" id="Q630R7"/>
<dbReference type="KEGG" id="bcz:BCE33L5031"/>
<dbReference type="PATRIC" id="fig|288681.22.peg.313"/>
<dbReference type="Proteomes" id="UP000002612">
    <property type="component" value="Chromosome"/>
</dbReference>
<dbReference type="GO" id="GO:1990904">
    <property type="term" value="C:ribonucleoprotein complex"/>
    <property type="evidence" value="ECO:0007669"/>
    <property type="project" value="UniProtKB-KW"/>
</dbReference>
<dbReference type="GO" id="GO:0005840">
    <property type="term" value="C:ribosome"/>
    <property type="evidence" value="ECO:0007669"/>
    <property type="project" value="UniProtKB-KW"/>
</dbReference>
<dbReference type="GO" id="GO:0003735">
    <property type="term" value="F:structural constituent of ribosome"/>
    <property type="evidence" value="ECO:0007669"/>
    <property type="project" value="InterPro"/>
</dbReference>
<dbReference type="GO" id="GO:0006412">
    <property type="term" value="P:translation"/>
    <property type="evidence" value="ECO:0007669"/>
    <property type="project" value="UniProtKB-UniRule"/>
</dbReference>
<dbReference type="Gene3D" id="4.10.830.30">
    <property type="entry name" value="Ribosomal protein L31"/>
    <property type="match status" value="1"/>
</dbReference>
<dbReference type="HAMAP" id="MF_00502">
    <property type="entry name" value="Ribosomal_bL31_2"/>
    <property type="match status" value="1"/>
</dbReference>
<dbReference type="InterPro" id="IPR034704">
    <property type="entry name" value="Ribosomal_bL28/bL31-like_sf"/>
</dbReference>
<dbReference type="InterPro" id="IPR002150">
    <property type="entry name" value="Ribosomal_bL31"/>
</dbReference>
<dbReference type="InterPro" id="IPR027493">
    <property type="entry name" value="Ribosomal_bL31_B"/>
</dbReference>
<dbReference type="InterPro" id="IPR042105">
    <property type="entry name" value="Ribosomal_bL31_sf"/>
</dbReference>
<dbReference type="NCBIfam" id="TIGR00105">
    <property type="entry name" value="L31"/>
    <property type="match status" value="1"/>
</dbReference>
<dbReference type="NCBIfam" id="NF002462">
    <property type="entry name" value="PRK01678.1"/>
    <property type="match status" value="1"/>
</dbReference>
<dbReference type="PANTHER" id="PTHR33280">
    <property type="entry name" value="50S RIBOSOMAL PROTEIN L31, CHLOROPLASTIC"/>
    <property type="match status" value="1"/>
</dbReference>
<dbReference type="PANTHER" id="PTHR33280:SF1">
    <property type="entry name" value="LARGE RIBOSOMAL SUBUNIT PROTEIN BL31C"/>
    <property type="match status" value="1"/>
</dbReference>
<dbReference type="Pfam" id="PF01197">
    <property type="entry name" value="Ribosomal_L31"/>
    <property type="match status" value="1"/>
</dbReference>
<dbReference type="PRINTS" id="PR01249">
    <property type="entry name" value="RIBOSOMALL31"/>
</dbReference>
<dbReference type="SUPFAM" id="SSF143800">
    <property type="entry name" value="L28p-like"/>
    <property type="match status" value="1"/>
</dbReference>
<dbReference type="PROSITE" id="PS01143">
    <property type="entry name" value="RIBOSOMAL_L31"/>
    <property type="match status" value="1"/>
</dbReference>
<organism>
    <name type="scientific">Bacillus cereus (strain ZK / E33L)</name>
    <dbReference type="NCBI Taxonomy" id="288681"/>
    <lineage>
        <taxon>Bacteria</taxon>
        <taxon>Bacillati</taxon>
        <taxon>Bacillota</taxon>
        <taxon>Bacilli</taxon>
        <taxon>Bacillales</taxon>
        <taxon>Bacillaceae</taxon>
        <taxon>Bacillus</taxon>
        <taxon>Bacillus cereus group</taxon>
    </lineage>
</organism>
<name>RL31B_BACCZ</name>
<comment type="subunit">
    <text evidence="1">Part of the 50S ribosomal subunit.</text>
</comment>
<comment type="similarity">
    <text evidence="1">Belongs to the bacterial ribosomal protein bL31 family. Type B subfamily.</text>
</comment>